<comment type="function">
    <text evidence="1">Bidirectionally degrades single-stranded DNA into large acid-insoluble oligonucleotides, which are then degraded further into small acid-soluble oligonucleotides.</text>
</comment>
<comment type="catalytic activity">
    <reaction evidence="1">
        <text>Exonucleolytic cleavage in either 5'- to 3'- or 3'- to 5'-direction to yield nucleoside 5'-phosphates.</text>
        <dbReference type="EC" id="3.1.11.6"/>
    </reaction>
</comment>
<comment type="subunit">
    <text evidence="1">Heterooligomer composed of large and small subunits.</text>
</comment>
<comment type="subcellular location">
    <subcellularLocation>
        <location evidence="1">Cytoplasm</location>
    </subcellularLocation>
</comment>
<comment type="similarity">
    <text evidence="1">Belongs to the XseA family.</text>
</comment>
<reference key="1">
    <citation type="journal article" date="2008" name="J. Bacteriol.">
        <title>The pangenome structure of Escherichia coli: comparative genomic analysis of E. coli commensal and pathogenic isolates.</title>
        <authorList>
            <person name="Rasko D.A."/>
            <person name="Rosovitz M.J."/>
            <person name="Myers G.S.A."/>
            <person name="Mongodin E.F."/>
            <person name="Fricke W.F."/>
            <person name="Gajer P."/>
            <person name="Crabtree J."/>
            <person name="Sebaihia M."/>
            <person name="Thomson N.R."/>
            <person name="Chaudhuri R."/>
            <person name="Henderson I.R."/>
            <person name="Sperandio V."/>
            <person name="Ravel J."/>
        </authorList>
    </citation>
    <scope>NUCLEOTIDE SEQUENCE [LARGE SCALE GENOMIC DNA]</scope>
    <source>
        <strain>HS</strain>
    </source>
</reference>
<gene>
    <name evidence="1" type="primary">xseA</name>
    <name type="ordered locus">EcHS_A2660</name>
</gene>
<organism>
    <name type="scientific">Escherichia coli O9:H4 (strain HS)</name>
    <dbReference type="NCBI Taxonomy" id="331112"/>
    <lineage>
        <taxon>Bacteria</taxon>
        <taxon>Pseudomonadati</taxon>
        <taxon>Pseudomonadota</taxon>
        <taxon>Gammaproteobacteria</taxon>
        <taxon>Enterobacterales</taxon>
        <taxon>Enterobacteriaceae</taxon>
        <taxon>Escherichia</taxon>
    </lineage>
</organism>
<protein>
    <recommendedName>
        <fullName evidence="1">Exodeoxyribonuclease 7 large subunit</fullName>
        <ecNumber evidence="1">3.1.11.6</ecNumber>
    </recommendedName>
    <alternativeName>
        <fullName evidence="1">Exodeoxyribonuclease VII large subunit</fullName>
        <shortName evidence="1">Exonuclease VII large subunit</shortName>
    </alternativeName>
</protein>
<keyword id="KW-0963">Cytoplasm</keyword>
<keyword id="KW-0269">Exonuclease</keyword>
<keyword id="KW-0378">Hydrolase</keyword>
<keyword id="KW-0540">Nuclease</keyword>
<evidence type="ECO:0000255" key="1">
    <source>
        <dbReference type="HAMAP-Rule" id="MF_00378"/>
    </source>
</evidence>
<dbReference type="EC" id="3.1.11.6" evidence="1"/>
<dbReference type="EMBL" id="CP000802">
    <property type="protein sequence ID" value="ABV06919.1"/>
    <property type="molecule type" value="Genomic_DNA"/>
</dbReference>
<dbReference type="RefSeq" id="WP_000937920.1">
    <property type="nucleotide sequence ID" value="NC_009800.1"/>
</dbReference>
<dbReference type="SMR" id="A8A315"/>
<dbReference type="KEGG" id="ecx:EcHS_A2660"/>
<dbReference type="HOGENOM" id="CLU_023625_3_1_6"/>
<dbReference type="GO" id="GO:0005737">
    <property type="term" value="C:cytoplasm"/>
    <property type="evidence" value="ECO:0007669"/>
    <property type="project" value="UniProtKB-SubCell"/>
</dbReference>
<dbReference type="GO" id="GO:0009318">
    <property type="term" value="C:exodeoxyribonuclease VII complex"/>
    <property type="evidence" value="ECO:0007669"/>
    <property type="project" value="InterPro"/>
</dbReference>
<dbReference type="GO" id="GO:0008855">
    <property type="term" value="F:exodeoxyribonuclease VII activity"/>
    <property type="evidence" value="ECO:0007669"/>
    <property type="project" value="UniProtKB-UniRule"/>
</dbReference>
<dbReference type="GO" id="GO:0003676">
    <property type="term" value="F:nucleic acid binding"/>
    <property type="evidence" value="ECO:0007669"/>
    <property type="project" value="InterPro"/>
</dbReference>
<dbReference type="GO" id="GO:0006308">
    <property type="term" value="P:DNA catabolic process"/>
    <property type="evidence" value="ECO:0007669"/>
    <property type="project" value="UniProtKB-UniRule"/>
</dbReference>
<dbReference type="CDD" id="cd04489">
    <property type="entry name" value="ExoVII_LU_OBF"/>
    <property type="match status" value="1"/>
</dbReference>
<dbReference type="HAMAP" id="MF_00378">
    <property type="entry name" value="Exonuc_7_L"/>
    <property type="match status" value="1"/>
</dbReference>
<dbReference type="InterPro" id="IPR003753">
    <property type="entry name" value="Exonuc_VII_L"/>
</dbReference>
<dbReference type="InterPro" id="IPR020579">
    <property type="entry name" value="Exonuc_VII_lsu_C"/>
</dbReference>
<dbReference type="InterPro" id="IPR025824">
    <property type="entry name" value="OB-fold_nuc-bd_dom"/>
</dbReference>
<dbReference type="NCBIfam" id="TIGR00237">
    <property type="entry name" value="xseA"/>
    <property type="match status" value="1"/>
</dbReference>
<dbReference type="PANTHER" id="PTHR30008">
    <property type="entry name" value="EXODEOXYRIBONUCLEASE 7 LARGE SUBUNIT"/>
    <property type="match status" value="1"/>
</dbReference>
<dbReference type="PANTHER" id="PTHR30008:SF0">
    <property type="entry name" value="EXODEOXYRIBONUCLEASE 7 LARGE SUBUNIT"/>
    <property type="match status" value="1"/>
</dbReference>
<dbReference type="Pfam" id="PF02601">
    <property type="entry name" value="Exonuc_VII_L"/>
    <property type="match status" value="1"/>
</dbReference>
<dbReference type="Pfam" id="PF13742">
    <property type="entry name" value="tRNA_anti_2"/>
    <property type="match status" value="1"/>
</dbReference>
<name>EX7L_ECOHS</name>
<proteinExistence type="inferred from homology"/>
<accession>A8A315</accession>
<feature type="chain" id="PRO_1000060027" description="Exodeoxyribonuclease 7 large subunit">
    <location>
        <begin position="1"/>
        <end position="456"/>
    </location>
</feature>
<sequence>MLPSQSPAIFTVSRLNQTVRLLLEHEMGQVWISGEISNFTQPASGHWYFTLKDDTAQVRCAMFRNSNRRVTFRPQHGQQVLVRANITLYEPRGDYQIIVESMQPAGEGLLQQKYEQLKAKLQAEGLFDQQYKKPLPSPAHCVGVITSKTGAALHDILHVLKRRDPSLPVIIYPTAVQGDDAPGQIVRAIELANQRNECDVLIVGRGGGSLEDLWSFNDERVARAIFASRIPVVSAVGHETDVTIADFVADLRAPTPSAAAEVVSRNQQELLRQVQSARQRLEMAMDYYLANRTRRFTQIHHRLQQQHPQLRLARQQTMLERLKKRMSFALENQLKRAGQQQQRLTQRLNQQNPQPKIHRAQTRIQQLEYRLAEILRAQLSATRERFGNAVTHLEAVSPLSTLARGYSVTTATDGNVLKKVKQVKAGEMLTTRLEDGWIESEVKNIQPVKKSRKKVH</sequence>